<evidence type="ECO:0000255" key="1">
    <source>
        <dbReference type="HAMAP-Rule" id="MF_00313"/>
    </source>
</evidence>
<evidence type="ECO:0000305" key="2"/>
<proteinExistence type="inferred from homology"/>
<keyword id="KW-0378">Hydrolase</keyword>
<keyword id="KW-1185">Reference proteome</keyword>
<reference key="1">
    <citation type="journal article" date="2006" name="J. Bacteriol.">
        <title>Genome sequence of Aeromonas hydrophila ATCC 7966T: jack of all trades.</title>
        <authorList>
            <person name="Seshadri R."/>
            <person name="Joseph S.W."/>
            <person name="Chopra A.K."/>
            <person name="Sha J."/>
            <person name="Shaw J."/>
            <person name="Graf J."/>
            <person name="Haft D.H."/>
            <person name="Wu M."/>
            <person name="Ren Q."/>
            <person name="Rosovitz M.J."/>
            <person name="Madupu R."/>
            <person name="Tallon L."/>
            <person name="Kim M."/>
            <person name="Jin S."/>
            <person name="Vuong H."/>
            <person name="Stine O.C."/>
            <person name="Ali A."/>
            <person name="Horneman A.J."/>
            <person name="Heidelberg J.F."/>
        </authorList>
    </citation>
    <scope>NUCLEOTIDE SEQUENCE [LARGE SCALE GENOMIC DNA]</scope>
    <source>
        <strain>ATCC 7966 / DSM 30187 / BCRC 13018 / CCUG 14551 / JCM 1027 / KCTC 2358 / NCIMB 9240 / NCTC 8049</strain>
    </source>
</reference>
<feature type="chain" id="PRO_0000336020" description="Glutaminase">
    <location>
        <begin position="1"/>
        <end position="306"/>
    </location>
</feature>
<feature type="binding site" evidence="1">
    <location>
        <position position="64"/>
    </location>
    <ligand>
        <name>substrate</name>
    </ligand>
</feature>
<feature type="binding site" evidence="1">
    <location>
        <position position="115"/>
    </location>
    <ligand>
        <name>substrate</name>
    </ligand>
</feature>
<feature type="binding site" evidence="1">
    <location>
        <position position="159"/>
    </location>
    <ligand>
        <name>substrate</name>
    </ligand>
</feature>
<feature type="binding site" evidence="1">
    <location>
        <position position="166"/>
    </location>
    <ligand>
        <name>substrate</name>
    </ligand>
</feature>
<feature type="binding site" evidence="1">
    <location>
        <position position="190"/>
    </location>
    <ligand>
        <name>substrate</name>
    </ligand>
</feature>
<feature type="binding site" evidence="1">
    <location>
        <position position="242"/>
    </location>
    <ligand>
        <name>substrate</name>
    </ligand>
</feature>
<feature type="binding site" evidence="1">
    <location>
        <position position="260"/>
    </location>
    <ligand>
        <name>substrate</name>
    </ligand>
</feature>
<comment type="catalytic activity">
    <reaction evidence="1">
        <text>L-glutamine + H2O = L-glutamate + NH4(+)</text>
        <dbReference type="Rhea" id="RHEA:15889"/>
        <dbReference type="ChEBI" id="CHEBI:15377"/>
        <dbReference type="ChEBI" id="CHEBI:28938"/>
        <dbReference type="ChEBI" id="CHEBI:29985"/>
        <dbReference type="ChEBI" id="CHEBI:58359"/>
        <dbReference type="EC" id="3.5.1.2"/>
    </reaction>
</comment>
<comment type="subunit">
    <text evidence="1">Homotetramer.</text>
</comment>
<comment type="similarity">
    <text evidence="1">Belongs to the glutaminase family.</text>
</comment>
<comment type="sequence caution" evidence="2">
    <conflict type="erroneous initiation">
        <sequence resource="EMBL-CDS" id="ABK36822"/>
    </conflict>
</comment>
<organism>
    <name type="scientific">Aeromonas hydrophila subsp. hydrophila (strain ATCC 7966 / DSM 30187 / BCRC 13018 / CCUG 14551 / JCM 1027 / KCTC 2358 / NCIMB 9240 / NCTC 8049)</name>
    <dbReference type="NCBI Taxonomy" id="380703"/>
    <lineage>
        <taxon>Bacteria</taxon>
        <taxon>Pseudomonadati</taxon>
        <taxon>Pseudomonadota</taxon>
        <taxon>Gammaproteobacteria</taxon>
        <taxon>Aeromonadales</taxon>
        <taxon>Aeromonadaceae</taxon>
        <taxon>Aeromonas</taxon>
    </lineage>
</organism>
<sequence>MVLSSELLTSILDEVRPLLGQGKVADYIPALAQVPADRLGIAVCTVEGELFTAGDASEPFSIQSISKALSLTLALTLYQEEEIWARVGKEPSGQPFNSLVQLEFEQGIPRNPFINAGALVVSDLLETRLTAPRQRTLELVRRLSGNPAIMADQVVARSEYQHSARNAAIAYLMKAYGNFENEVDKVLQSYFNACAIRMSCVDLARAFIYLANRGVPLGATTPLLPARTTKQVNALLATCGLYDEAGDFAYRVGMPGKSGVGGGIIALIPGELCVCVWSPELNKAGNSLAGTAALELLAERLGRSIF</sequence>
<accession>A0KNV3</accession>
<dbReference type="EC" id="3.5.1.2" evidence="1"/>
<dbReference type="EMBL" id="CP000462">
    <property type="protein sequence ID" value="ABK36822.1"/>
    <property type="status" value="ALT_INIT"/>
    <property type="molecule type" value="Genomic_DNA"/>
</dbReference>
<dbReference type="RefSeq" id="YP_857954.1">
    <property type="nucleotide sequence ID" value="NC_008570.1"/>
</dbReference>
<dbReference type="SMR" id="A0KNV3"/>
<dbReference type="STRING" id="380703.AHA_3480"/>
<dbReference type="EnsemblBacteria" id="ABK36822">
    <property type="protein sequence ID" value="ABK36822"/>
    <property type="gene ID" value="AHA_3480"/>
</dbReference>
<dbReference type="KEGG" id="aha:AHA_3480"/>
<dbReference type="PATRIC" id="fig|380703.7.peg.3468"/>
<dbReference type="eggNOG" id="COG2066">
    <property type="taxonomic scope" value="Bacteria"/>
</dbReference>
<dbReference type="HOGENOM" id="CLU_027932_1_1_6"/>
<dbReference type="OrthoDB" id="9788822at2"/>
<dbReference type="Proteomes" id="UP000000756">
    <property type="component" value="Chromosome"/>
</dbReference>
<dbReference type="GO" id="GO:0004359">
    <property type="term" value="F:glutaminase activity"/>
    <property type="evidence" value="ECO:0007669"/>
    <property type="project" value="UniProtKB-UniRule"/>
</dbReference>
<dbReference type="GO" id="GO:0006537">
    <property type="term" value="P:glutamate biosynthetic process"/>
    <property type="evidence" value="ECO:0007669"/>
    <property type="project" value="TreeGrafter"/>
</dbReference>
<dbReference type="GO" id="GO:0006543">
    <property type="term" value="P:glutamine catabolic process"/>
    <property type="evidence" value="ECO:0007669"/>
    <property type="project" value="TreeGrafter"/>
</dbReference>
<dbReference type="FunFam" id="3.40.710.10:FF:000005">
    <property type="entry name" value="Glutaminase"/>
    <property type="match status" value="1"/>
</dbReference>
<dbReference type="Gene3D" id="3.40.710.10">
    <property type="entry name" value="DD-peptidase/beta-lactamase superfamily"/>
    <property type="match status" value="1"/>
</dbReference>
<dbReference type="HAMAP" id="MF_00313">
    <property type="entry name" value="Glutaminase"/>
    <property type="match status" value="1"/>
</dbReference>
<dbReference type="InterPro" id="IPR012338">
    <property type="entry name" value="Beta-lactam/transpept-like"/>
</dbReference>
<dbReference type="InterPro" id="IPR015868">
    <property type="entry name" value="Glutaminase"/>
</dbReference>
<dbReference type="NCBIfam" id="TIGR03814">
    <property type="entry name" value="Gln_ase"/>
    <property type="match status" value="1"/>
</dbReference>
<dbReference type="NCBIfam" id="NF002132">
    <property type="entry name" value="PRK00971.1-1"/>
    <property type="match status" value="1"/>
</dbReference>
<dbReference type="NCBIfam" id="NF002133">
    <property type="entry name" value="PRK00971.1-2"/>
    <property type="match status" value="1"/>
</dbReference>
<dbReference type="PANTHER" id="PTHR12544">
    <property type="entry name" value="GLUTAMINASE"/>
    <property type="match status" value="1"/>
</dbReference>
<dbReference type="PANTHER" id="PTHR12544:SF29">
    <property type="entry name" value="GLUTAMINASE"/>
    <property type="match status" value="1"/>
</dbReference>
<dbReference type="Pfam" id="PF04960">
    <property type="entry name" value="Glutaminase"/>
    <property type="match status" value="1"/>
</dbReference>
<dbReference type="SUPFAM" id="SSF56601">
    <property type="entry name" value="beta-lactamase/transpeptidase-like"/>
    <property type="match status" value="1"/>
</dbReference>
<gene>
    <name evidence="1" type="primary">glsA</name>
    <name type="ordered locus">AHA_3480</name>
</gene>
<protein>
    <recommendedName>
        <fullName evidence="1">Glutaminase</fullName>
        <ecNumber evidence="1">3.5.1.2</ecNumber>
    </recommendedName>
</protein>
<name>GLSA_AERHH</name>